<comment type="subcellular location">
    <subcellularLocation>
        <location evidence="2">Secreted</location>
    </subcellularLocation>
</comment>
<comment type="tissue specificity">
    <text evidence="2">Expressed by the venom gland (posterior main gland) (at protein level).</text>
</comment>
<comment type="similarity">
    <text evidence="4">Belongs to the insect vpf1 family.</text>
</comment>
<protein>
    <recommendedName>
        <fullName evidence="3">Venom protein family 1 protein 1</fullName>
        <shortName evidence="3">f1p1</shortName>
    </recommendedName>
</protein>
<dbReference type="EMBL" id="MN208279">
    <property type="protein sequence ID" value="QHB21468.1"/>
    <property type="molecule type" value="mRNA"/>
</dbReference>
<dbReference type="GO" id="GO:0005576">
    <property type="term" value="C:extracellular region"/>
    <property type="evidence" value="ECO:0007669"/>
    <property type="project" value="UniProtKB-SubCell"/>
</dbReference>
<sequence>MKSFIVVLCCLFAITYGQTDLPAIRRNARFQRNLALVALHNQIFGAEGVENGLAKTQEEKVCILNVKEAALEEGNIVLDETVGKIIPEVERLSTSGTEAEIKAFLDKTDYPAYKKSAMNEFKQKIMTWIPAVQGKMAACRK</sequence>
<proteinExistence type="evidence at protein level"/>
<reference key="1">
    <citation type="journal article" date="2019" name="Toxins">
        <title>Missiles of mass disruption: composition and glandular origin of venom used as a projectile defensive weapon by the assassin bug Platymeris rhadamanthus.</title>
        <authorList>
            <person name="Walker A.A."/>
            <person name="Robinson S.D."/>
            <person name="Undheim E.A.B."/>
            <person name="Jin J."/>
            <person name="Han X."/>
            <person name="Fry B.G."/>
            <person name="Vetter I."/>
            <person name="King G.F."/>
        </authorList>
    </citation>
    <scope>NUCLEOTIDE SEQUENCE [MRNA]</scope>
    <scope>IDENTIFICATION BY MASS SPECTROMETRY</scope>
    <scope>SUBCELLULAR LOCATION</scope>
    <scope>TISSUE SPECIFICITY</scope>
    <source>
        <tissue>Venom</tissue>
        <tissue>Venom gland</tissue>
    </source>
</reference>
<organism>
    <name type="scientific">Platymeris rhadamanthus</name>
    <name type="common">Red spot assassin bug</name>
    <dbReference type="NCBI Taxonomy" id="1134088"/>
    <lineage>
        <taxon>Eukaryota</taxon>
        <taxon>Metazoa</taxon>
        <taxon>Ecdysozoa</taxon>
        <taxon>Arthropoda</taxon>
        <taxon>Hexapoda</taxon>
        <taxon>Insecta</taxon>
        <taxon>Pterygota</taxon>
        <taxon>Neoptera</taxon>
        <taxon>Paraneoptera</taxon>
        <taxon>Hemiptera</taxon>
        <taxon>Heteroptera</taxon>
        <taxon>Panheteroptera</taxon>
        <taxon>Cimicomorpha</taxon>
        <taxon>Reduviidae</taxon>
        <taxon>Platymeris</taxon>
    </lineage>
</organism>
<accession>A0A6B9L664</accession>
<name>F1P1_PLARH</name>
<evidence type="ECO:0000255" key="1"/>
<evidence type="ECO:0000269" key="2">
    <source>
    </source>
</evidence>
<evidence type="ECO:0000303" key="3">
    <source>
    </source>
</evidence>
<evidence type="ECO:0000305" key="4"/>
<feature type="signal peptide" evidence="1">
    <location>
        <begin position="1"/>
        <end position="17"/>
    </location>
</feature>
<feature type="chain" id="PRO_5025662428" description="Venom protein family 1 protein 1" evidence="4">
    <location>
        <begin position="18"/>
        <end position="141"/>
    </location>
</feature>
<feature type="disulfide bond" evidence="4">
    <location>
        <begin position="62"/>
        <end position="139"/>
    </location>
</feature>
<keyword id="KW-1015">Disulfide bond</keyword>
<keyword id="KW-0964">Secreted</keyword>
<keyword id="KW-0732">Signal</keyword>